<accession>A1UQU8</accession>
<evidence type="ECO:0000255" key="1">
    <source>
        <dbReference type="HAMAP-Rule" id="MF_00074"/>
    </source>
</evidence>
<sequence length="215" mass="24527">MVVLVEQKYQELLNMLPSVSRETMENLIQFESLIIQWNAHINLISAATVPFLWTRHILDSAQIYPLYSQCLHWCDLGSGGGFPAIVIAIFLKEKQKGHIDLIESNGKKVAFLRTVIAQLNLPATVYHCRIEDVYQKINAPEIITARGLASLNTLLQLTFPWLKQKTIALLQKGRDYAIEVENAYANWRFNLLKHQSKIDENSVILEISHVRSCQG</sequence>
<protein>
    <recommendedName>
        <fullName evidence="1">Ribosomal RNA small subunit methyltransferase G</fullName>
        <ecNumber evidence="1">2.1.1.170</ecNumber>
    </recommendedName>
    <alternativeName>
        <fullName evidence="1">16S rRNA 7-methylguanosine methyltransferase</fullName>
        <shortName evidence="1">16S rRNA m7G methyltransferase</shortName>
    </alternativeName>
</protein>
<keyword id="KW-0963">Cytoplasm</keyword>
<keyword id="KW-0489">Methyltransferase</keyword>
<keyword id="KW-0698">rRNA processing</keyword>
<keyword id="KW-0949">S-adenosyl-L-methionine</keyword>
<keyword id="KW-0808">Transferase</keyword>
<comment type="function">
    <text evidence="1">Specifically methylates the N7 position of guanine in position 527 of 16S rRNA.</text>
</comment>
<comment type="catalytic activity">
    <reaction evidence="1">
        <text>guanosine(527) in 16S rRNA + S-adenosyl-L-methionine = N(7)-methylguanosine(527) in 16S rRNA + S-adenosyl-L-homocysteine</text>
        <dbReference type="Rhea" id="RHEA:42732"/>
        <dbReference type="Rhea" id="RHEA-COMP:10209"/>
        <dbReference type="Rhea" id="RHEA-COMP:10210"/>
        <dbReference type="ChEBI" id="CHEBI:57856"/>
        <dbReference type="ChEBI" id="CHEBI:59789"/>
        <dbReference type="ChEBI" id="CHEBI:74269"/>
        <dbReference type="ChEBI" id="CHEBI:74480"/>
        <dbReference type="EC" id="2.1.1.170"/>
    </reaction>
</comment>
<comment type="subcellular location">
    <subcellularLocation>
        <location evidence="1">Cytoplasm</location>
    </subcellularLocation>
</comment>
<comment type="similarity">
    <text evidence="1">Belongs to the methyltransferase superfamily. RNA methyltransferase RsmG family.</text>
</comment>
<name>RSMG_BARBK</name>
<gene>
    <name evidence="1" type="primary">rsmG</name>
    <name type="ordered locus">BARBAKC583_0012</name>
</gene>
<organism>
    <name type="scientific">Bartonella bacilliformis (strain ATCC 35685 / KC583 / Herrer 020/F12,63)</name>
    <dbReference type="NCBI Taxonomy" id="360095"/>
    <lineage>
        <taxon>Bacteria</taxon>
        <taxon>Pseudomonadati</taxon>
        <taxon>Pseudomonadota</taxon>
        <taxon>Alphaproteobacteria</taxon>
        <taxon>Hyphomicrobiales</taxon>
        <taxon>Bartonellaceae</taxon>
        <taxon>Bartonella</taxon>
    </lineage>
</organism>
<dbReference type="EC" id="2.1.1.170" evidence="1"/>
<dbReference type="EMBL" id="CP000524">
    <property type="protein sequence ID" value="ABM45326.1"/>
    <property type="molecule type" value="Genomic_DNA"/>
</dbReference>
<dbReference type="RefSeq" id="WP_005765690.1">
    <property type="nucleotide sequence ID" value="NC_008783.1"/>
</dbReference>
<dbReference type="SMR" id="A1UQU8"/>
<dbReference type="STRING" id="360095.BARBAKC583_0012"/>
<dbReference type="GeneID" id="4683881"/>
<dbReference type="KEGG" id="bbk:BARBAKC583_0012"/>
<dbReference type="PATRIC" id="fig|360095.6.peg.12"/>
<dbReference type="eggNOG" id="COG0357">
    <property type="taxonomic scope" value="Bacteria"/>
</dbReference>
<dbReference type="HOGENOM" id="CLU_065341_1_1_5"/>
<dbReference type="OrthoDB" id="9808773at2"/>
<dbReference type="Proteomes" id="UP000000643">
    <property type="component" value="Chromosome"/>
</dbReference>
<dbReference type="GO" id="GO:0005829">
    <property type="term" value="C:cytosol"/>
    <property type="evidence" value="ECO:0007669"/>
    <property type="project" value="TreeGrafter"/>
</dbReference>
<dbReference type="GO" id="GO:0070043">
    <property type="term" value="F:rRNA (guanine-N7-)-methyltransferase activity"/>
    <property type="evidence" value="ECO:0007669"/>
    <property type="project" value="UniProtKB-UniRule"/>
</dbReference>
<dbReference type="Gene3D" id="3.40.50.150">
    <property type="entry name" value="Vaccinia Virus protein VP39"/>
    <property type="match status" value="1"/>
</dbReference>
<dbReference type="HAMAP" id="MF_00074">
    <property type="entry name" value="16SrRNA_methyltr_G"/>
    <property type="match status" value="1"/>
</dbReference>
<dbReference type="InterPro" id="IPR003682">
    <property type="entry name" value="rRNA_ssu_MeTfrase_G"/>
</dbReference>
<dbReference type="InterPro" id="IPR029063">
    <property type="entry name" value="SAM-dependent_MTases_sf"/>
</dbReference>
<dbReference type="NCBIfam" id="TIGR00138">
    <property type="entry name" value="rsmG_gidB"/>
    <property type="match status" value="1"/>
</dbReference>
<dbReference type="PANTHER" id="PTHR31760">
    <property type="entry name" value="S-ADENOSYL-L-METHIONINE-DEPENDENT METHYLTRANSFERASES SUPERFAMILY PROTEIN"/>
    <property type="match status" value="1"/>
</dbReference>
<dbReference type="PANTHER" id="PTHR31760:SF0">
    <property type="entry name" value="S-ADENOSYL-L-METHIONINE-DEPENDENT METHYLTRANSFERASES SUPERFAMILY PROTEIN"/>
    <property type="match status" value="1"/>
</dbReference>
<dbReference type="Pfam" id="PF02527">
    <property type="entry name" value="GidB"/>
    <property type="match status" value="1"/>
</dbReference>
<dbReference type="PIRSF" id="PIRSF003078">
    <property type="entry name" value="GidB"/>
    <property type="match status" value="1"/>
</dbReference>
<dbReference type="SUPFAM" id="SSF53335">
    <property type="entry name" value="S-adenosyl-L-methionine-dependent methyltransferases"/>
    <property type="match status" value="1"/>
</dbReference>
<feature type="chain" id="PRO_1000010124" description="Ribosomal RNA small subunit methyltransferase G">
    <location>
        <begin position="1"/>
        <end position="215"/>
    </location>
</feature>
<feature type="binding site" evidence="1">
    <location>
        <position position="77"/>
    </location>
    <ligand>
        <name>S-adenosyl-L-methionine</name>
        <dbReference type="ChEBI" id="CHEBI:59789"/>
    </ligand>
</feature>
<feature type="binding site" evidence="1">
    <location>
        <position position="82"/>
    </location>
    <ligand>
        <name>S-adenosyl-L-methionine</name>
        <dbReference type="ChEBI" id="CHEBI:59789"/>
    </ligand>
</feature>
<feature type="binding site" evidence="1">
    <location>
        <begin position="130"/>
        <end position="131"/>
    </location>
    <ligand>
        <name>S-adenosyl-L-methionine</name>
        <dbReference type="ChEBI" id="CHEBI:59789"/>
    </ligand>
</feature>
<feature type="binding site" evidence="1">
    <location>
        <position position="146"/>
    </location>
    <ligand>
        <name>S-adenosyl-L-methionine</name>
        <dbReference type="ChEBI" id="CHEBI:59789"/>
    </ligand>
</feature>
<proteinExistence type="inferred from homology"/>
<reference key="1">
    <citation type="submission" date="2006-12" db="EMBL/GenBank/DDBJ databases">
        <authorList>
            <person name="Hendrix L."/>
            <person name="Mohamoud Y."/>
            <person name="Radune D."/>
            <person name="Shvartsbeyn A."/>
            <person name="Daugherty S."/>
            <person name="Dodson R."/>
            <person name="Durkin A.S."/>
            <person name="Harkins D."/>
            <person name="Huot H."/>
            <person name="Kothari S.P."/>
            <person name="Madupu R."/>
            <person name="Li J."/>
            <person name="Nelson W.C."/>
            <person name="Shrivastava S."/>
            <person name="Giglio M.G."/>
            <person name="Haft D."/>
            <person name="Selengut J."/>
            <person name="Fraser-Ligget C."/>
            <person name="Seshadri R."/>
        </authorList>
    </citation>
    <scope>NUCLEOTIDE SEQUENCE [LARGE SCALE GENOMIC DNA]</scope>
    <source>
        <strain>ATCC 35685 / KC583 / Herrer 020/F12,63</strain>
    </source>
</reference>